<reference key="1">
    <citation type="journal article" date="2002" name="Nucleic Acids Res.">
        <title>Genome sequence of Shigella flexneri 2a: insights into pathogenicity through comparison with genomes of Escherichia coli K12 and O157.</title>
        <authorList>
            <person name="Jin Q."/>
            <person name="Yuan Z."/>
            <person name="Xu J."/>
            <person name="Wang Y."/>
            <person name="Shen Y."/>
            <person name="Lu W."/>
            <person name="Wang J."/>
            <person name="Liu H."/>
            <person name="Yang J."/>
            <person name="Yang F."/>
            <person name="Zhang X."/>
            <person name="Zhang J."/>
            <person name="Yang G."/>
            <person name="Wu H."/>
            <person name="Qu D."/>
            <person name="Dong J."/>
            <person name="Sun L."/>
            <person name="Xue Y."/>
            <person name="Zhao A."/>
            <person name="Gao Y."/>
            <person name="Zhu J."/>
            <person name="Kan B."/>
            <person name="Ding K."/>
            <person name="Chen S."/>
            <person name="Cheng H."/>
            <person name="Yao Z."/>
            <person name="He B."/>
            <person name="Chen R."/>
            <person name="Ma D."/>
            <person name="Qiang B."/>
            <person name="Wen Y."/>
            <person name="Hou Y."/>
            <person name="Yu J."/>
        </authorList>
    </citation>
    <scope>NUCLEOTIDE SEQUENCE [LARGE SCALE GENOMIC DNA]</scope>
    <source>
        <strain>301 / Serotype 2a</strain>
    </source>
</reference>
<reference key="2">
    <citation type="journal article" date="2003" name="Infect. Immun.">
        <title>Complete genome sequence and comparative genomics of Shigella flexneri serotype 2a strain 2457T.</title>
        <authorList>
            <person name="Wei J."/>
            <person name="Goldberg M.B."/>
            <person name="Burland V."/>
            <person name="Venkatesan M.M."/>
            <person name="Deng W."/>
            <person name="Fournier G."/>
            <person name="Mayhew G.F."/>
            <person name="Plunkett G. III"/>
            <person name="Rose D.J."/>
            <person name="Darling A."/>
            <person name="Mau B."/>
            <person name="Perna N.T."/>
            <person name="Payne S.M."/>
            <person name="Runyen-Janecky L.J."/>
            <person name="Zhou S."/>
            <person name="Schwartz D.C."/>
            <person name="Blattner F.R."/>
        </authorList>
    </citation>
    <scope>NUCLEOTIDE SEQUENCE [LARGE SCALE GENOMIC DNA]</scope>
    <source>
        <strain>ATCC 700930 / 2457T / Serotype 2a</strain>
    </source>
</reference>
<gene>
    <name evidence="1" type="primary">argO</name>
    <name type="ordered locus">SF2908</name>
    <name type="ordered locus">S3108</name>
</gene>
<dbReference type="EMBL" id="AE005674">
    <property type="protein sequence ID" value="AAN44390.2"/>
    <property type="molecule type" value="Genomic_DNA"/>
</dbReference>
<dbReference type="EMBL" id="AE014073">
    <property type="protein sequence ID" value="AAP18212.1"/>
    <property type="molecule type" value="Genomic_DNA"/>
</dbReference>
<dbReference type="RefSeq" id="WP_000493360.1">
    <property type="nucleotide sequence ID" value="NZ_WPGW01000018.1"/>
</dbReference>
<dbReference type="STRING" id="198214.SF2908"/>
<dbReference type="PaxDb" id="198214-SF2908"/>
<dbReference type="KEGG" id="sfl:SF2908"/>
<dbReference type="KEGG" id="sfx:S3108"/>
<dbReference type="PATRIC" id="fig|198214.7.peg.3459"/>
<dbReference type="HOGENOM" id="CLU_087840_0_1_6"/>
<dbReference type="Proteomes" id="UP000001006">
    <property type="component" value="Chromosome"/>
</dbReference>
<dbReference type="Proteomes" id="UP000002673">
    <property type="component" value="Chromosome"/>
</dbReference>
<dbReference type="GO" id="GO:0005886">
    <property type="term" value="C:plasma membrane"/>
    <property type="evidence" value="ECO:0007669"/>
    <property type="project" value="UniProtKB-SubCell"/>
</dbReference>
<dbReference type="GO" id="GO:0061459">
    <property type="term" value="F:L-arginine transmembrane transporter activity"/>
    <property type="evidence" value="ECO:0007669"/>
    <property type="project" value="UniProtKB-UniRule"/>
</dbReference>
<dbReference type="HAMAP" id="MF_01901">
    <property type="entry name" value="ArgO"/>
    <property type="match status" value="1"/>
</dbReference>
<dbReference type="InterPro" id="IPR023445">
    <property type="entry name" value="Arg_export_ArgO_enterobac"/>
</dbReference>
<dbReference type="InterPro" id="IPR001123">
    <property type="entry name" value="LeuE-type"/>
</dbReference>
<dbReference type="InterPro" id="IPR004777">
    <property type="entry name" value="Lys/arg_exporter"/>
</dbReference>
<dbReference type="NCBIfam" id="TIGR00948">
    <property type="entry name" value="2a75"/>
    <property type="match status" value="1"/>
</dbReference>
<dbReference type="NCBIfam" id="NF006801">
    <property type="entry name" value="PRK09304.1"/>
    <property type="match status" value="1"/>
</dbReference>
<dbReference type="PANTHER" id="PTHR30086">
    <property type="entry name" value="ARGININE EXPORTER PROTEIN ARGO"/>
    <property type="match status" value="1"/>
</dbReference>
<dbReference type="PANTHER" id="PTHR30086:SF20">
    <property type="entry name" value="ARGININE EXPORTER PROTEIN ARGO-RELATED"/>
    <property type="match status" value="1"/>
</dbReference>
<dbReference type="Pfam" id="PF01810">
    <property type="entry name" value="LysE"/>
    <property type="match status" value="1"/>
</dbReference>
<evidence type="ECO:0000255" key="1">
    <source>
        <dbReference type="HAMAP-Rule" id="MF_01901"/>
    </source>
</evidence>
<evidence type="ECO:0000305" key="2"/>
<name>ARGO_SHIFL</name>
<feature type="chain" id="PRO_0000204167" description="Arginine exporter protein ArgO">
    <location>
        <begin position="1"/>
        <end position="211"/>
    </location>
</feature>
<feature type="transmembrane region" description="Helical" evidence="1">
    <location>
        <begin position="1"/>
        <end position="21"/>
    </location>
</feature>
<feature type="transmembrane region" description="Helical" evidence="1">
    <location>
        <begin position="37"/>
        <end position="57"/>
    </location>
</feature>
<feature type="transmembrane region" description="Helical" evidence="1">
    <location>
        <begin position="68"/>
        <end position="88"/>
    </location>
</feature>
<feature type="transmembrane region" description="Helical" evidence="1">
    <location>
        <begin position="111"/>
        <end position="131"/>
    </location>
</feature>
<feature type="transmembrane region" description="Helical" evidence="1">
    <location>
        <begin position="147"/>
        <end position="167"/>
    </location>
</feature>
<feature type="transmembrane region" description="Helical" evidence="1">
    <location>
        <begin position="182"/>
        <end position="202"/>
    </location>
</feature>
<keyword id="KW-0029">Amino-acid transport</keyword>
<keyword id="KW-0997">Cell inner membrane</keyword>
<keyword id="KW-1003">Cell membrane</keyword>
<keyword id="KW-0472">Membrane</keyword>
<keyword id="KW-1185">Reference proteome</keyword>
<keyword id="KW-0812">Transmembrane</keyword>
<keyword id="KW-1133">Transmembrane helix</keyword>
<keyword id="KW-0813">Transport</keyword>
<protein>
    <recommendedName>
        <fullName evidence="1">Arginine exporter protein ArgO</fullName>
    </recommendedName>
</protein>
<organism>
    <name type="scientific">Shigella flexneri</name>
    <dbReference type="NCBI Taxonomy" id="623"/>
    <lineage>
        <taxon>Bacteria</taxon>
        <taxon>Pseudomonadati</taxon>
        <taxon>Pseudomonadota</taxon>
        <taxon>Gammaproteobacteria</taxon>
        <taxon>Enterobacterales</taxon>
        <taxon>Enterobacteriaceae</taxon>
        <taxon>Shigella</taxon>
    </lineage>
</organism>
<accession>Q7UBP8</accession>
<accession>Q83JT7</accession>
<proteinExistence type="inferred from homology"/>
<sequence>MFSYYFQGLALGAAMILPLGPQNAFVMNQGIRRQYHIMIALLCAISDLVLICAGIFGGSALLMQSPWLLALVTWGGVVFLLWYGFGAFKTAMSSNIELASAEVLKQGRWKIIATMLAVTWLNPHVYLDTFVVLGSLGGQLDVEPKRWFALGTISASFLWFFGLAILAAWLAPRLRTAKSQRIINLVVGCVMWFIALQLARDGIAHAQALFS</sequence>
<comment type="function">
    <text evidence="1">Involved in the export of arginine. Important to control the intracellular level of arginine and the correct balance between arginine and lysine.</text>
</comment>
<comment type="catalytic activity">
    <reaction evidence="1">
        <text>L-arginine(in) = L-arginine(out)</text>
        <dbReference type="Rhea" id="RHEA:32143"/>
        <dbReference type="ChEBI" id="CHEBI:32682"/>
    </reaction>
    <physiologicalReaction direction="left-to-right" evidence="1">
        <dbReference type="Rhea" id="RHEA:32144"/>
    </physiologicalReaction>
</comment>
<comment type="subcellular location">
    <subcellularLocation>
        <location evidence="1">Cell inner membrane</location>
        <topology evidence="1">Multi-pass membrane protein</topology>
    </subcellularLocation>
</comment>
<comment type="similarity">
    <text evidence="1 2">Belongs to the LysE/ArgO transporter (TC 2.A.75) family.</text>
</comment>